<reference key="1">
    <citation type="journal article" date="2012" name="PLoS ONE">
        <title>The success of Acinetobacter species; genetic, metabolic and virulence attributes.</title>
        <authorList>
            <person name="Peleg A.Y."/>
            <person name="de Breij A."/>
            <person name="Adams M.D."/>
            <person name="Cerqueira G.M."/>
            <person name="Mocali S."/>
            <person name="Galardini M."/>
            <person name="Nibbering P.H."/>
            <person name="Earl A.M."/>
            <person name="Ward D.V."/>
            <person name="Paterson D.L."/>
            <person name="Seifert H."/>
            <person name="Dijkshoorn L."/>
        </authorList>
    </citation>
    <scope>NUCLEOTIDE SEQUENCE [LARGE SCALE GENOMIC DNA]</scope>
    <source>
        <strain>ATCC 19606 / DSM 30007 / JCM 6841 / CCUG 19606 / CIP 70.34 / NBRC 109757 / NCIMB 12457 / NCTC 12156 / 81</strain>
    </source>
</reference>
<reference key="2">
    <citation type="submission" date="2013-02" db="EMBL/GenBank/DDBJ databases">
        <title>The genome sequence of Acinetobacter baumannii CIP 70.34T.</title>
        <authorList>
            <consortium name="The Broad Institute Genome Sequencing Platform"/>
            <consortium name="The Broad Institute Genome Sequencing Center for Infectious Disease"/>
            <person name="Cerqueira G."/>
            <person name="Feldgarden M."/>
            <person name="Courvalin P."/>
            <person name="Perichon B."/>
            <person name="Grillot-Courvalin C."/>
            <person name="Clermont D."/>
            <person name="Rocha E."/>
            <person name="Yoon E.-J."/>
            <person name="Nemec A."/>
            <person name="Walker B."/>
            <person name="Young S.K."/>
            <person name="Zeng Q."/>
            <person name="Gargeya S."/>
            <person name="Fitzgerald M."/>
            <person name="Haas B."/>
            <person name="Abouelleil A."/>
            <person name="Alvarado L."/>
            <person name="Arachchi H.M."/>
            <person name="Berlin A.M."/>
            <person name="Chapman S.B."/>
            <person name="Dewar J."/>
            <person name="Goldberg J."/>
            <person name="Griggs A."/>
            <person name="Gujja S."/>
            <person name="Hansen M."/>
            <person name="Howarth C."/>
            <person name="Imamovic A."/>
            <person name="Larimer J."/>
            <person name="McCowan C."/>
            <person name="Murphy C."/>
            <person name="Neiman D."/>
            <person name="Pearson M."/>
            <person name="Priest M."/>
            <person name="Roberts A."/>
            <person name="Saif S."/>
            <person name="Shea T."/>
            <person name="Sisk P."/>
            <person name="Sykes S."/>
            <person name="Wortman J."/>
            <person name="Nusbaum C."/>
            <person name="Birren B."/>
        </authorList>
    </citation>
    <scope>NUCLEOTIDE SEQUENCE [LARGE SCALE GENOMIC DNA]</scope>
    <source>
        <strain>ATCC 19606 / DSM 30007 / JCM 6841 / CCUG 19606 / CIP 70.34 / NBRC 109757 / NCIMB 12457 / NCTC 12156 / 81</strain>
    </source>
</reference>
<reference key="3">
    <citation type="journal article" date="2014" name="Proc. Natl. Acad. Sci. U.S.A.">
        <title>Carnitine metabolism to trimethylamine by an unusual Rieske-type oxygenase from human microbiota.</title>
        <authorList>
            <person name="Zhu Y."/>
            <person name="Jameson E."/>
            <person name="Crosatti M."/>
            <person name="Schaefer H."/>
            <person name="Rajakumar K."/>
            <person name="Bugg T.D."/>
            <person name="Chen Y."/>
        </authorList>
    </citation>
    <scope>FUNCTION</scope>
    <scope>CATALYTIC ACTIVITY</scope>
    <scope>PATHWAY</scope>
    <scope>SUBUNIT</scope>
    <scope>DISRUPTION PHENOTYPE</scope>
    <source>
        <strain>ATCC 19606 / DSM 30007 / JCM 6841 / CCUG 19606 / CIP 70.34 / NBRC 109757 / NCIMB 12457 / NCTC 12156 / 81</strain>
    </source>
</reference>
<dbReference type="EC" id="1.14.13.239" evidence="2 5"/>
<dbReference type="EMBL" id="GG704573">
    <property type="protein sequence ID" value="EEX03957.1"/>
    <property type="molecule type" value="Genomic_DNA"/>
</dbReference>
<dbReference type="EMBL" id="APRG01000016">
    <property type="protein sequence ID" value="ENW73703.1"/>
    <property type="molecule type" value="Genomic_DNA"/>
</dbReference>
<dbReference type="RefSeq" id="WP_000146428.1">
    <property type="nucleotide sequence ID" value="NZ_MJHA01000009.1"/>
</dbReference>
<dbReference type="SMR" id="D0C9N8"/>
<dbReference type="GeneID" id="92892786"/>
<dbReference type="PATRIC" id="fig|575584.18.peg.3257"/>
<dbReference type="BioCyc" id="MetaCyc:MONOMER-18570"/>
<dbReference type="BRENDA" id="1.14.13.239">
    <property type="organism ID" value="98"/>
</dbReference>
<dbReference type="UniPathway" id="UPA00117"/>
<dbReference type="Proteomes" id="UP000005740">
    <property type="component" value="Unassembled WGS sequence"/>
</dbReference>
<dbReference type="GO" id="GO:0051537">
    <property type="term" value="F:2 iron, 2 sulfur cluster binding"/>
    <property type="evidence" value="ECO:0007669"/>
    <property type="project" value="UniProtKB-UniRule"/>
</dbReference>
<dbReference type="GO" id="GO:0046872">
    <property type="term" value="F:metal ion binding"/>
    <property type="evidence" value="ECO:0007669"/>
    <property type="project" value="UniProtKB-KW"/>
</dbReference>
<dbReference type="GO" id="GO:0016709">
    <property type="term" value="F:oxidoreductase activity, acting on paired donors, with incorporation or reduction of molecular oxygen, NAD(P)H as one donor, and incorporation of one atom of oxygen"/>
    <property type="evidence" value="ECO:0007669"/>
    <property type="project" value="UniProtKB-UniRule"/>
</dbReference>
<dbReference type="GO" id="GO:0009437">
    <property type="term" value="P:carnitine metabolic process"/>
    <property type="evidence" value="ECO:0007669"/>
    <property type="project" value="UniProtKB-UniRule"/>
</dbReference>
<dbReference type="CDD" id="cd00207">
    <property type="entry name" value="fer2"/>
    <property type="match status" value="1"/>
</dbReference>
<dbReference type="CDD" id="cd06185">
    <property type="entry name" value="PDR_like"/>
    <property type="match status" value="1"/>
</dbReference>
<dbReference type="Gene3D" id="3.10.20.30">
    <property type="match status" value="1"/>
</dbReference>
<dbReference type="Gene3D" id="3.40.50.80">
    <property type="entry name" value="Nucleotide-binding domain of ferredoxin-NADP reductase (FNR) module"/>
    <property type="match status" value="1"/>
</dbReference>
<dbReference type="Gene3D" id="2.40.30.10">
    <property type="entry name" value="Translation factors"/>
    <property type="match status" value="1"/>
</dbReference>
<dbReference type="HAMAP" id="MF_02098">
    <property type="entry name" value="Carnitine_monoox_B"/>
    <property type="match status" value="1"/>
</dbReference>
<dbReference type="InterPro" id="IPR036010">
    <property type="entry name" value="2Fe-2S_ferredoxin-like_sf"/>
</dbReference>
<dbReference type="InterPro" id="IPR001041">
    <property type="entry name" value="2Fe-2S_ferredoxin-type"/>
</dbReference>
<dbReference type="InterPro" id="IPR006058">
    <property type="entry name" value="2Fe2S_fd_BS"/>
</dbReference>
<dbReference type="InterPro" id="IPR052353">
    <property type="entry name" value="Benzoxazolinone_Detox_Enz"/>
</dbReference>
<dbReference type="InterPro" id="IPR012675">
    <property type="entry name" value="Beta-grasp_dom_sf"/>
</dbReference>
<dbReference type="InterPro" id="IPR039003">
    <property type="entry name" value="Carnitine_monoox_B"/>
</dbReference>
<dbReference type="InterPro" id="IPR008333">
    <property type="entry name" value="Cbr1-like_FAD-bd_dom"/>
</dbReference>
<dbReference type="InterPro" id="IPR054582">
    <property type="entry name" value="DmmA-like_N"/>
</dbReference>
<dbReference type="InterPro" id="IPR017927">
    <property type="entry name" value="FAD-bd_FR_type"/>
</dbReference>
<dbReference type="InterPro" id="IPR039261">
    <property type="entry name" value="FNR_nucleotide-bd"/>
</dbReference>
<dbReference type="InterPro" id="IPR017938">
    <property type="entry name" value="Riboflavin_synthase-like_b-brl"/>
</dbReference>
<dbReference type="PANTHER" id="PTHR30212">
    <property type="entry name" value="PROTEIN YIIM"/>
    <property type="match status" value="1"/>
</dbReference>
<dbReference type="PANTHER" id="PTHR30212:SF2">
    <property type="entry name" value="PROTEIN YIIM"/>
    <property type="match status" value="1"/>
</dbReference>
<dbReference type="Pfam" id="PF22290">
    <property type="entry name" value="DmmA-like_N"/>
    <property type="match status" value="1"/>
</dbReference>
<dbReference type="Pfam" id="PF00970">
    <property type="entry name" value="FAD_binding_6"/>
    <property type="match status" value="1"/>
</dbReference>
<dbReference type="Pfam" id="PF00111">
    <property type="entry name" value="Fer2"/>
    <property type="match status" value="1"/>
</dbReference>
<dbReference type="PRINTS" id="PR00409">
    <property type="entry name" value="PHDIOXRDTASE"/>
</dbReference>
<dbReference type="SUPFAM" id="SSF54292">
    <property type="entry name" value="2Fe-2S ferredoxin-like"/>
    <property type="match status" value="1"/>
</dbReference>
<dbReference type="SUPFAM" id="SSF52343">
    <property type="entry name" value="Ferredoxin reductase-like, C-terminal NADP-linked domain"/>
    <property type="match status" value="1"/>
</dbReference>
<dbReference type="SUPFAM" id="SSF63380">
    <property type="entry name" value="Riboflavin synthase domain-like"/>
    <property type="match status" value="1"/>
</dbReference>
<dbReference type="PROSITE" id="PS00197">
    <property type="entry name" value="2FE2S_FER_1"/>
    <property type="match status" value="1"/>
</dbReference>
<dbReference type="PROSITE" id="PS51085">
    <property type="entry name" value="2FE2S_FER_2"/>
    <property type="match status" value="1"/>
</dbReference>
<dbReference type="PROSITE" id="PS51384">
    <property type="entry name" value="FAD_FR"/>
    <property type="match status" value="1"/>
</dbReference>
<keyword id="KW-0001">2Fe-2S</keyword>
<keyword id="KW-0285">Flavoprotein</keyword>
<keyword id="KW-0288">FMN</keyword>
<keyword id="KW-0408">Iron</keyword>
<keyword id="KW-0411">Iron-sulfur</keyword>
<keyword id="KW-0479">Metal-binding</keyword>
<keyword id="KW-0520">NAD</keyword>
<keyword id="KW-0521">NADP</keyword>
<keyword id="KW-0560">Oxidoreductase</keyword>
<keyword id="KW-1185">Reference proteome</keyword>
<comment type="function">
    <text evidence="2 5">Converts carnitine to trimethylamine and malic semialdehyde.</text>
</comment>
<comment type="catalytic activity">
    <reaction evidence="2 5">
        <text>(R)-carnitine + NADH + O2 + H(+) = (3R)-3-hydroxy-4-oxobutanoate + trimethylamine + NAD(+) + H2O</text>
        <dbReference type="Rhea" id="RHEA:55396"/>
        <dbReference type="ChEBI" id="CHEBI:15377"/>
        <dbReference type="ChEBI" id="CHEBI:15378"/>
        <dbReference type="ChEBI" id="CHEBI:15379"/>
        <dbReference type="ChEBI" id="CHEBI:16347"/>
        <dbReference type="ChEBI" id="CHEBI:57540"/>
        <dbReference type="ChEBI" id="CHEBI:57945"/>
        <dbReference type="ChEBI" id="CHEBI:58389"/>
        <dbReference type="ChEBI" id="CHEBI:138809"/>
        <dbReference type="EC" id="1.14.13.239"/>
    </reaction>
</comment>
<comment type="catalytic activity">
    <reaction evidence="2 5">
        <text>(R)-carnitine + NADPH + O2 + H(+) = (3R)-3-hydroxy-4-oxobutanoate + trimethylamine + NADP(+) + H2O</text>
        <dbReference type="Rhea" id="RHEA:55368"/>
        <dbReference type="ChEBI" id="CHEBI:15377"/>
        <dbReference type="ChEBI" id="CHEBI:15378"/>
        <dbReference type="ChEBI" id="CHEBI:15379"/>
        <dbReference type="ChEBI" id="CHEBI:16347"/>
        <dbReference type="ChEBI" id="CHEBI:57783"/>
        <dbReference type="ChEBI" id="CHEBI:58349"/>
        <dbReference type="ChEBI" id="CHEBI:58389"/>
        <dbReference type="ChEBI" id="CHEBI:138809"/>
        <dbReference type="EC" id="1.14.13.239"/>
    </reaction>
</comment>
<comment type="cofactor">
    <cofactor evidence="1 2">
        <name>FMN</name>
        <dbReference type="ChEBI" id="CHEBI:58210"/>
    </cofactor>
</comment>
<comment type="cofactor">
    <cofactor evidence="2 3">
        <name>[2Fe-2S] cluster</name>
        <dbReference type="ChEBI" id="CHEBI:190135"/>
    </cofactor>
    <text evidence="2 3">Binds 1 2Fe-2S cluster.</text>
</comment>
<comment type="pathway">
    <text evidence="2 5">Amine and polyamine metabolism; carnitine metabolism.</text>
</comment>
<comment type="subunit">
    <text evidence="5">Composed of an oxygenase subunit (cntA) and a reductase subunit (cntB).</text>
</comment>
<comment type="disruption phenotype">
    <text evidence="5">Mutant cannot grow on carnitine as a sole carbon and energy source, whereas the growth on succinate is not affected. Mutation abolishes trimethylamine formation from carnitine.</text>
</comment>
<comment type="similarity">
    <text evidence="2 7">Belongs to the PDR/VanB family. CntB subfamily.</text>
</comment>
<accession>D0C9N8</accession>
<gene>
    <name evidence="6" type="primary">cntB</name>
    <name evidence="9" type="ORF">F911_03117</name>
    <name evidence="8" type="ORF">HMPREF0010_01351</name>
</gene>
<feature type="chain" id="PRO_0000442688" description="Carnitine monooxygenase reductase subunit">
    <location>
        <begin position="1"/>
        <end position="318"/>
    </location>
</feature>
<feature type="domain" description="FAD-binding FR-type" evidence="2 4">
    <location>
        <begin position="5"/>
        <end position="107"/>
    </location>
</feature>
<feature type="domain" description="2Fe-2S ferredoxin-type" evidence="3">
    <location>
        <begin position="233"/>
        <end position="318"/>
    </location>
</feature>
<feature type="binding site" evidence="2 3">
    <location>
        <position position="267"/>
    </location>
    <ligand>
        <name>[2Fe-2S] cluster</name>
        <dbReference type="ChEBI" id="CHEBI:190135"/>
    </ligand>
</feature>
<feature type="binding site" evidence="2 3">
    <location>
        <position position="272"/>
    </location>
    <ligand>
        <name>[2Fe-2S] cluster</name>
        <dbReference type="ChEBI" id="CHEBI:190135"/>
    </ligand>
</feature>
<feature type="binding site" evidence="2 3">
    <location>
        <position position="275"/>
    </location>
    <ligand>
        <name>[2Fe-2S] cluster</name>
        <dbReference type="ChEBI" id="CHEBI:190135"/>
    </ligand>
</feature>
<feature type="binding site" evidence="2 3">
    <location>
        <position position="305"/>
    </location>
    <ligand>
        <name>[2Fe-2S] cluster</name>
        <dbReference type="ChEBI" id="CHEBI:190135"/>
    </ligand>
</feature>
<proteinExistence type="evidence at protein level"/>
<sequence>MASHYEMFPAVVTRVEQLTPLIKRFTFKRQDGQNFPRFSGGSHIIVKMNEQLSNAYSLMSCTQDLSTYQVCVRKDVEGKGGSVFMHDQCNEGCEIQISEPKNLFPLAETGNKHILIAGGIGITPFLPQMDELAARGAEYELHYAYRSPEHAALLDELTQKHAGHVFSYVDSEGSMLNLDELISSQPKGTHVYVCGPKPMIDAVIDCCNKHRYRDEYIHWEQFASTVPEDGEAFTVVLAKSNQEIEVQSNQTILQAIETLNIDVECLCREGVCGTCETAILEGEAEHFDQYLSDAEKASQKSMMICVSRAKGKKLVLDL</sequence>
<organism>
    <name type="scientific">Acinetobacter baumannii (strain ATCC 19606 / DSM 30007 / JCM 6841 / CCUG 19606 / CIP 70.34 / NBRC 109757 / NCIMB 12457 / NCTC 12156 / 81)</name>
    <dbReference type="NCBI Taxonomy" id="575584"/>
    <lineage>
        <taxon>Bacteria</taxon>
        <taxon>Pseudomonadati</taxon>
        <taxon>Pseudomonadota</taxon>
        <taxon>Gammaproteobacteria</taxon>
        <taxon>Moraxellales</taxon>
        <taxon>Moraxellaceae</taxon>
        <taxon>Acinetobacter</taxon>
        <taxon>Acinetobacter calcoaceticus/baumannii complex</taxon>
    </lineage>
</organism>
<protein>
    <recommendedName>
        <fullName evidence="2 7">Carnitine monooxygenase reductase subunit</fullName>
        <ecNumber evidence="2 5">1.14.13.239</ecNumber>
    </recommendedName>
    <alternativeName>
        <fullName evidence="2 7">Carnitine monooxygenase beta subunit</fullName>
    </alternativeName>
</protein>
<name>CNTB_ACIB2</name>
<evidence type="ECO:0000250" key="1">
    <source>
        <dbReference type="UniProtKB" id="P33164"/>
    </source>
</evidence>
<evidence type="ECO:0000255" key="2">
    <source>
        <dbReference type="HAMAP-Rule" id="MF_02098"/>
    </source>
</evidence>
<evidence type="ECO:0000255" key="3">
    <source>
        <dbReference type="PROSITE-ProRule" id="PRU00465"/>
    </source>
</evidence>
<evidence type="ECO:0000255" key="4">
    <source>
        <dbReference type="PROSITE-ProRule" id="PRU00716"/>
    </source>
</evidence>
<evidence type="ECO:0000269" key="5">
    <source>
    </source>
</evidence>
<evidence type="ECO:0000303" key="6">
    <source>
    </source>
</evidence>
<evidence type="ECO:0000305" key="7"/>
<evidence type="ECO:0000312" key="8">
    <source>
        <dbReference type="EMBL" id="EEX03957.1"/>
    </source>
</evidence>
<evidence type="ECO:0000312" key="9">
    <source>
        <dbReference type="EMBL" id="ENW73703.1"/>
    </source>
</evidence>